<proteinExistence type="inferred from homology"/>
<name>RL2_ESCF3</name>
<evidence type="ECO:0000255" key="1">
    <source>
        <dbReference type="HAMAP-Rule" id="MF_01320"/>
    </source>
</evidence>
<evidence type="ECO:0000256" key="2">
    <source>
        <dbReference type="SAM" id="MobiDB-lite"/>
    </source>
</evidence>
<evidence type="ECO:0000305" key="3"/>
<dbReference type="EMBL" id="CU928158">
    <property type="protein sequence ID" value="CAQ90780.1"/>
    <property type="molecule type" value="Genomic_DNA"/>
</dbReference>
<dbReference type="RefSeq" id="WP_000301864.1">
    <property type="nucleotide sequence ID" value="NC_011740.1"/>
</dbReference>
<dbReference type="SMR" id="B7LRT3"/>
<dbReference type="GeneID" id="93778670"/>
<dbReference type="KEGG" id="efe:EFER_3300"/>
<dbReference type="HOGENOM" id="CLU_036235_2_1_6"/>
<dbReference type="OrthoDB" id="9778722at2"/>
<dbReference type="Proteomes" id="UP000000745">
    <property type="component" value="Chromosome"/>
</dbReference>
<dbReference type="GO" id="GO:0005829">
    <property type="term" value="C:cytosol"/>
    <property type="evidence" value="ECO:0007669"/>
    <property type="project" value="UniProtKB-ARBA"/>
</dbReference>
<dbReference type="GO" id="GO:0015934">
    <property type="term" value="C:large ribosomal subunit"/>
    <property type="evidence" value="ECO:0007669"/>
    <property type="project" value="InterPro"/>
</dbReference>
<dbReference type="GO" id="GO:0019843">
    <property type="term" value="F:rRNA binding"/>
    <property type="evidence" value="ECO:0007669"/>
    <property type="project" value="UniProtKB-UniRule"/>
</dbReference>
<dbReference type="GO" id="GO:0003735">
    <property type="term" value="F:structural constituent of ribosome"/>
    <property type="evidence" value="ECO:0007669"/>
    <property type="project" value="InterPro"/>
</dbReference>
<dbReference type="GO" id="GO:0016740">
    <property type="term" value="F:transferase activity"/>
    <property type="evidence" value="ECO:0007669"/>
    <property type="project" value="InterPro"/>
</dbReference>
<dbReference type="GO" id="GO:0002181">
    <property type="term" value="P:cytoplasmic translation"/>
    <property type="evidence" value="ECO:0007669"/>
    <property type="project" value="TreeGrafter"/>
</dbReference>
<dbReference type="FunFam" id="2.30.30.30:FF:000001">
    <property type="entry name" value="50S ribosomal protein L2"/>
    <property type="match status" value="1"/>
</dbReference>
<dbReference type="FunFam" id="2.40.50.140:FF:000003">
    <property type="entry name" value="50S ribosomal protein L2"/>
    <property type="match status" value="1"/>
</dbReference>
<dbReference type="FunFam" id="4.10.950.10:FF:000001">
    <property type="entry name" value="50S ribosomal protein L2"/>
    <property type="match status" value="1"/>
</dbReference>
<dbReference type="Gene3D" id="2.30.30.30">
    <property type="match status" value="1"/>
</dbReference>
<dbReference type="Gene3D" id="2.40.50.140">
    <property type="entry name" value="Nucleic acid-binding proteins"/>
    <property type="match status" value="1"/>
</dbReference>
<dbReference type="Gene3D" id="4.10.950.10">
    <property type="entry name" value="Ribosomal protein L2, domain 3"/>
    <property type="match status" value="1"/>
</dbReference>
<dbReference type="HAMAP" id="MF_01320_B">
    <property type="entry name" value="Ribosomal_uL2_B"/>
    <property type="match status" value="1"/>
</dbReference>
<dbReference type="InterPro" id="IPR012340">
    <property type="entry name" value="NA-bd_OB-fold"/>
</dbReference>
<dbReference type="InterPro" id="IPR014722">
    <property type="entry name" value="Rib_uL2_dom2"/>
</dbReference>
<dbReference type="InterPro" id="IPR002171">
    <property type="entry name" value="Ribosomal_uL2"/>
</dbReference>
<dbReference type="InterPro" id="IPR005880">
    <property type="entry name" value="Ribosomal_uL2_bac/org-type"/>
</dbReference>
<dbReference type="InterPro" id="IPR022669">
    <property type="entry name" value="Ribosomal_uL2_C"/>
</dbReference>
<dbReference type="InterPro" id="IPR022671">
    <property type="entry name" value="Ribosomal_uL2_CS"/>
</dbReference>
<dbReference type="InterPro" id="IPR014726">
    <property type="entry name" value="Ribosomal_uL2_dom3"/>
</dbReference>
<dbReference type="InterPro" id="IPR022666">
    <property type="entry name" value="Ribosomal_uL2_RNA-bd_dom"/>
</dbReference>
<dbReference type="InterPro" id="IPR008991">
    <property type="entry name" value="Translation_prot_SH3-like_sf"/>
</dbReference>
<dbReference type="NCBIfam" id="TIGR01171">
    <property type="entry name" value="rplB_bact"/>
    <property type="match status" value="1"/>
</dbReference>
<dbReference type="PANTHER" id="PTHR13691:SF5">
    <property type="entry name" value="LARGE RIBOSOMAL SUBUNIT PROTEIN UL2M"/>
    <property type="match status" value="1"/>
</dbReference>
<dbReference type="PANTHER" id="PTHR13691">
    <property type="entry name" value="RIBOSOMAL PROTEIN L2"/>
    <property type="match status" value="1"/>
</dbReference>
<dbReference type="Pfam" id="PF00181">
    <property type="entry name" value="Ribosomal_L2"/>
    <property type="match status" value="1"/>
</dbReference>
<dbReference type="Pfam" id="PF03947">
    <property type="entry name" value="Ribosomal_L2_C"/>
    <property type="match status" value="1"/>
</dbReference>
<dbReference type="PIRSF" id="PIRSF002158">
    <property type="entry name" value="Ribosomal_L2"/>
    <property type="match status" value="1"/>
</dbReference>
<dbReference type="SMART" id="SM01383">
    <property type="entry name" value="Ribosomal_L2"/>
    <property type="match status" value="1"/>
</dbReference>
<dbReference type="SMART" id="SM01382">
    <property type="entry name" value="Ribosomal_L2_C"/>
    <property type="match status" value="1"/>
</dbReference>
<dbReference type="SUPFAM" id="SSF50249">
    <property type="entry name" value="Nucleic acid-binding proteins"/>
    <property type="match status" value="1"/>
</dbReference>
<dbReference type="SUPFAM" id="SSF50104">
    <property type="entry name" value="Translation proteins SH3-like domain"/>
    <property type="match status" value="1"/>
</dbReference>
<dbReference type="PROSITE" id="PS00467">
    <property type="entry name" value="RIBOSOMAL_L2"/>
    <property type="match status" value="1"/>
</dbReference>
<comment type="function">
    <text evidence="1">One of the primary rRNA binding proteins. Required for association of the 30S and 50S subunits to form the 70S ribosome, for tRNA binding and peptide bond formation. It has been suggested to have peptidyltransferase activity; this is somewhat controversial. Makes several contacts with the 16S rRNA in the 70S ribosome.</text>
</comment>
<comment type="subunit">
    <text evidence="1">Part of the 50S ribosomal subunit. Forms a bridge to the 30S subunit in the 70S ribosome.</text>
</comment>
<comment type="similarity">
    <text evidence="1">Belongs to the universal ribosomal protein uL2 family.</text>
</comment>
<feature type="chain" id="PRO_1000141553" description="Large ribosomal subunit protein uL2">
    <location>
        <begin position="1"/>
        <end position="273"/>
    </location>
</feature>
<feature type="region of interest" description="Disordered" evidence="2">
    <location>
        <begin position="28"/>
        <end position="53"/>
    </location>
</feature>
<feature type="region of interest" description="Disordered" evidence="2">
    <location>
        <begin position="221"/>
        <end position="273"/>
    </location>
</feature>
<feature type="compositionally biased region" description="Low complexity" evidence="2">
    <location>
        <begin position="39"/>
        <end position="48"/>
    </location>
</feature>
<feature type="modified residue" description="N6-acetyllysine" evidence="1">
    <location>
        <position position="242"/>
    </location>
</feature>
<protein>
    <recommendedName>
        <fullName evidence="1">Large ribosomal subunit protein uL2</fullName>
    </recommendedName>
    <alternativeName>
        <fullName evidence="3">50S ribosomal protein L2</fullName>
    </alternativeName>
</protein>
<gene>
    <name evidence="1" type="primary">rplB</name>
    <name type="ordered locus">EFER_3300</name>
</gene>
<keyword id="KW-0007">Acetylation</keyword>
<keyword id="KW-0687">Ribonucleoprotein</keyword>
<keyword id="KW-0689">Ribosomal protein</keyword>
<keyword id="KW-0694">RNA-binding</keyword>
<keyword id="KW-0699">rRNA-binding</keyword>
<reference key="1">
    <citation type="journal article" date="2009" name="PLoS Genet.">
        <title>Organised genome dynamics in the Escherichia coli species results in highly diverse adaptive paths.</title>
        <authorList>
            <person name="Touchon M."/>
            <person name="Hoede C."/>
            <person name="Tenaillon O."/>
            <person name="Barbe V."/>
            <person name="Baeriswyl S."/>
            <person name="Bidet P."/>
            <person name="Bingen E."/>
            <person name="Bonacorsi S."/>
            <person name="Bouchier C."/>
            <person name="Bouvet O."/>
            <person name="Calteau A."/>
            <person name="Chiapello H."/>
            <person name="Clermont O."/>
            <person name="Cruveiller S."/>
            <person name="Danchin A."/>
            <person name="Diard M."/>
            <person name="Dossat C."/>
            <person name="Karoui M.E."/>
            <person name="Frapy E."/>
            <person name="Garry L."/>
            <person name="Ghigo J.M."/>
            <person name="Gilles A.M."/>
            <person name="Johnson J."/>
            <person name="Le Bouguenec C."/>
            <person name="Lescat M."/>
            <person name="Mangenot S."/>
            <person name="Martinez-Jehanne V."/>
            <person name="Matic I."/>
            <person name="Nassif X."/>
            <person name="Oztas S."/>
            <person name="Petit M.A."/>
            <person name="Pichon C."/>
            <person name="Rouy Z."/>
            <person name="Ruf C.S."/>
            <person name="Schneider D."/>
            <person name="Tourret J."/>
            <person name="Vacherie B."/>
            <person name="Vallenet D."/>
            <person name="Medigue C."/>
            <person name="Rocha E.P.C."/>
            <person name="Denamur E."/>
        </authorList>
    </citation>
    <scope>NUCLEOTIDE SEQUENCE [LARGE SCALE GENOMIC DNA]</scope>
    <source>
        <strain>ATCC 35469 / DSM 13698 / BCRC 15582 / CCUG 18766 / IAM 14443 / JCM 21226 / LMG 7866 / NBRC 102419 / NCTC 12128 / CDC 0568-73</strain>
    </source>
</reference>
<sequence>MAVVKCKPTSPGRRHVVKVVNPELHKGKPFAPLLEKNSKSGGRNNNGRITTRHIGGGHKQAYRIVDFKRNKDGIPAVVERLEYDPNRSANIALVLYKDGERRYILAPKGLKAGDQIQSGVDAAIKPGNTLPMRNIPVGSTVHNVEMKPGKGGQLARSAGTYVQIVARDGAYVTLRLRSGEMRKVEADCRATLGEVGNAEHMLRVLGKAGAARWRGVRPTVRGTAMNPVDHPHGGGEGRNFGKHPVTPWGVQTKGKKTRSNKRTDKFIVRRRSK</sequence>
<organism>
    <name type="scientific">Escherichia fergusonii (strain ATCC 35469 / DSM 13698 / CCUG 18766 / IAM 14443 / JCM 21226 / LMG 7866 / NBRC 102419 / NCTC 12128 / CDC 0568-73)</name>
    <dbReference type="NCBI Taxonomy" id="585054"/>
    <lineage>
        <taxon>Bacteria</taxon>
        <taxon>Pseudomonadati</taxon>
        <taxon>Pseudomonadota</taxon>
        <taxon>Gammaproteobacteria</taxon>
        <taxon>Enterobacterales</taxon>
        <taxon>Enterobacteriaceae</taxon>
        <taxon>Escherichia</taxon>
    </lineage>
</organism>
<accession>B7LRT3</accession>